<proteinExistence type="inferred from homology"/>
<accession>Q820Q9</accession>
<sequence>MARLLEYYRDTVTKELTQKFNYKTVMEVPKITKITLNMGVGEASTDKKIIENAVSDLEKISAQKPVVTKARKSIATFKVRQGYPVGCKVTLRGVKMYEFLDRLVNVAIPRIRDFRGIQVKGFDGRGNFNMGIKEQIIFPEIDYDKIDKVRGLNITVTTTAKTDQEARALLSAFKFPFKN</sequence>
<feature type="chain" id="PRO_0000124959" description="Large ribosomal subunit protein uL5">
    <location>
        <begin position="1"/>
        <end position="179"/>
    </location>
</feature>
<reference key="1">
    <citation type="journal article" date="2003" name="J. Bacteriol.">
        <title>Complete genome sequence of the ammonia-oxidizing bacterium and obligate chemolithoautotroph Nitrosomonas europaea.</title>
        <authorList>
            <person name="Chain P."/>
            <person name="Lamerdin J.E."/>
            <person name="Larimer F.W."/>
            <person name="Regala W."/>
            <person name="Lao V."/>
            <person name="Land M.L."/>
            <person name="Hauser L."/>
            <person name="Hooper A.B."/>
            <person name="Klotz M.G."/>
            <person name="Norton J."/>
            <person name="Sayavedra-Soto L.A."/>
            <person name="Arciero D.M."/>
            <person name="Hommes N.G."/>
            <person name="Whittaker M.M."/>
            <person name="Arp D.J."/>
        </authorList>
    </citation>
    <scope>NUCLEOTIDE SEQUENCE [LARGE SCALE GENOMIC DNA]</scope>
    <source>
        <strain>ATCC 19718 / CIP 103999 / KCTC 2705 / NBRC 14298</strain>
    </source>
</reference>
<comment type="function">
    <text evidence="1">This is one of the proteins that bind and probably mediate the attachment of the 5S RNA into the large ribosomal subunit, where it forms part of the central protuberance. In the 70S ribosome it contacts protein S13 of the 30S subunit (bridge B1b), connecting the 2 subunits; this bridge is implicated in subunit movement. Contacts the P site tRNA; the 5S rRNA and some of its associated proteins might help stabilize positioning of ribosome-bound tRNAs.</text>
</comment>
<comment type="subunit">
    <text evidence="1">Part of the 50S ribosomal subunit; part of the 5S rRNA/L5/L18/L25 subcomplex. Contacts the 5S rRNA and the P site tRNA. Forms a bridge to the 30S subunit in the 70S ribosome.</text>
</comment>
<comment type="similarity">
    <text evidence="1">Belongs to the universal ribosomal protein uL5 family.</text>
</comment>
<gene>
    <name evidence="1" type="primary">rplE</name>
    <name type="ordered locus">NE0413</name>
</gene>
<protein>
    <recommendedName>
        <fullName evidence="1">Large ribosomal subunit protein uL5</fullName>
    </recommendedName>
    <alternativeName>
        <fullName evidence="2">50S ribosomal protein L5</fullName>
    </alternativeName>
</protein>
<name>RL5_NITEU</name>
<dbReference type="EMBL" id="AL954747">
    <property type="protein sequence ID" value="CAD84324.1"/>
    <property type="molecule type" value="Genomic_DNA"/>
</dbReference>
<dbReference type="RefSeq" id="WP_011111048.1">
    <property type="nucleotide sequence ID" value="NC_004757.1"/>
</dbReference>
<dbReference type="SMR" id="Q820Q9"/>
<dbReference type="STRING" id="228410.NE0413"/>
<dbReference type="GeneID" id="87103622"/>
<dbReference type="KEGG" id="neu:NE0413"/>
<dbReference type="eggNOG" id="COG0094">
    <property type="taxonomic scope" value="Bacteria"/>
</dbReference>
<dbReference type="HOGENOM" id="CLU_061015_2_1_4"/>
<dbReference type="OrthoDB" id="9806626at2"/>
<dbReference type="PhylomeDB" id="Q820Q9"/>
<dbReference type="Proteomes" id="UP000001416">
    <property type="component" value="Chromosome"/>
</dbReference>
<dbReference type="GO" id="GO:1990904">
    <property type="term" value="C:ribonucleoprotein complex"/>
    <property type="evidence" value="ECO:0007669"/>
    <property type="project" value="UniProtKB-KW"/>
</dbReference>
<dbReference type="GO" id="GO:0005840">
    <property type="term" value="C:ribosome"/>
    <property type="evidence" value="ECO:0007669"/>
    <property type="project" value="UniProtKB-KW"/>
</dbReference>
<dbReference type="GO" id="GO:0019843">
    <property type="term" value="F:rRNA binding"/>
    <property type="evidence" value="ECO:0007669"/>
    <property type="project" value="UniProtKB-UniRule"/>
</dbReference>
<dbReference type="GO" id="GO:0003735">
    <property type="term" value="F:structural constituent of ribosome"/>
    <property type="evidence" value="ECO:0007669"/>
    <property type="project" value="InterPro"/>
</dbReference>
<dbReference type="GO" id="GO:0000049">
    <property type="term" value="F:tRNA binding"/>
    <property type="evidence" value="ECO:0007669"/>
    <property type="project" value="UniProtKB-UniRule"/>
</dbReference>
<dbReference type="GO" id="GO:0006412">
    <property type="term" value="P:translation"/>
    <property type="evidence" value="ECO:0007669"/>
    <property type="project" value="UniProtKB-UniRule"/>
</dbReference>
<dbReference type="FunFam" id="3.30.1440.10:FF:000001">
    <property type="entry name" value="50S ribosomal protein L5"/>
    <property type="match status" value="1"/>
</dbReference>
<dbReference type="Gene3D" id="3.30.1440.10">
    <property type="match status" value="1"/>
</dbReference>
<dbReference type="HAMAP" id="MF_01333_B">
    <property type="entry name" value="Ribosomal_uL5_B"/>
    <property type="match status" value="1"/>
</dbReference>
<dbReference type="InterPro" id="IPR002132">
    <property type="entry name" value="Ribosomal_uL5"/>
</dbReference>
<dbReference type="InterPro" id="IPR020930">
    <property type="entry name" value="Ribosomal_uL5_bac-type"/>
</dbReference>
<dbReference type="InterPro" id="IPR031309">
    <property type="entry name" value="Ribosomal_uL5_C"/>
</dbReference>
<dbReference type="InterPro" id="IPR022803">
    <property type="entry name" value="Ribosomal_uL5_dom_sf"/>
</dbReference>
<dbReference type="InterPro" id="IPR031310">
    <property type="entry name" value="Ribosomal_uL5_N"/>
</dbReference>
<dbReference type="NCBIfam" id="NF000585">
    <property type="entry name" value="PRK00010.1"/>
    <property type="match status" value="1"/>
</dbReference>
<dbReference type="PANTHER" id="PTHR11994">
    <property type="entry name" value="60S RIBOSOMAL PROTEIN L11-RELATED"/>
    <property type="match status" value="1"/>
</dbReference>
<dbReference type="Pfam" id="PF00281">
    <property type="entry name" value="Ribosomal_L5"/>
    <property type="match status" value="1"/>
</dbReference>
<dbReference type="Pfam" id="PF00673">
    <property type="entry name" value="Ribosomal_L5_C"/>
    <property type="match status" value="1"/>
</dbReference>
<dbReference type="PIRSF" id="PIRSF002161">
    <property type="entry name" value="Ribosomal_L5"/>
    <property type="match status" value="1"/>
</dbReference>
<dbReference type="SUPFAM" id="SSF55282">
    <property type="entry name" value="RL5-like"/>
    <property type="match status" value="1"/>
</dbReference>
<evidence type="ECO:0000255" key="1">
    <source>
        <dbReference type="HAMAP-Rule" id="MF_01333"/>
    </source>
</evidence>
<evidence type="ECO:0000305" key="2"/>
<organism>
    <name type="scientific">Nitrosomonas europaea (strain ATCC 19718 / CIP 103999 / KCTC 2705 / NBRC 14298)</name>
    <dbReference type="NCBI Taxonomy" id="228410"/>
    <lineage>
        <taxon>Bacteria</taxon>
        <taxon>Pseudomonadati</taxon>
        <taxon>Pseudomonadota</taxon>
        <taxon>Betaproteobacteria</taxon>
        <taxon>Nitrosomonadales</taxon>
        <taxon>Nitrosomonadaceae</taxon>
        <taxon>Nitrosomonas</taxon>
    </lineage>
</organism>
<keyword id="KW-1185">Reference proteome</keyword>
<keyword id="KW-0687">Ribonucleoprotein</keyword>
<keyword id="KW-0689">Ribosomal protein</keyword>
<keyword id="KW-0694">RNA-binding</keyword>
<keyword id="KW-0699">rRNA-binding</keyword>
<keyword id="KW-0820">tRNA-binding</keyword>